<dbReference type="EC" id="2.3.1.189" evidence="1"/>
<dbReference type="EMBL" id="CP000249">
    <property type="protein sequence ID" value="ABD09828.1"/>
    <property type="molecule type" value="Genomic_DNA"/>
</dbReference>
<dbReference type="RefSeq" id="WP_011434906.1">
    <property type="nucleotide sequence ID" value="NZ_JENI01000018.1"/>
</dbReference>
<dbReference type="SMR" id="Q2JFW4"/>
<dbReference type="STRING" id="106370.Francci3_0442"/>
<dbReference type="KEGG" id="fra:Francci3_0442"/>
<dbReference type="eggNOG" id="COG0456">
    <property type="taxonomic scope" value="Bacteria"/>
</dbReference>
<dbReference type="HOGENOM" id="CLU_068014_0_0_11"/>
<dbReference type="OrthoDB" id="3208058at2"/>
<dbReference type="PhylomeDB" id="Q2JFW4"/>
<dbReference type="Proteomes" id="UP000001937">
    <property type="component" value="Chromosome"/>
</dbReference>
<dbReference type="GO" id="GO:0035447">
    <property type="term" value="F:mycothiol synthase activity"/>
    <property type="evidence" value="ECO:0007669"/>
    <property type="project" value="UniProtKB-UniRule"/>
</dbReference>
<dbReference type="GO" id="GO:0010125">
    <property type="term" value="P:mycothiol biosynthetic process"/>
    <property type="evidence" value="ECO:0007669"/>
    <property type="project" value="UniProtKB-UniRule"/>
</dbReference>
<dbReference type="CDD" id="cd04301">
    <property type="entry name" value="NAT_SF"/>
    <property type="match status" value="1"/>
</dbReference>
<dbReference type="Gene3D" id="3.40.630.30">
    <property type="match status" value="1"/>
</dbReference>
<dbReference type="HAMAP" id="MF_01698">
    <property type="entry name" value="MshD"/>
    <property type="match status" value="1"/>
</dbReference>
<dbReference type="InterPro" id="IPR016181">
    <property type="entry name" value="Acyl_CoA_acyltransferase"/>
</dbReference>
<dbReference type="InterPro" id="IPR050832">
    <property type="entry name" value="Bact_Acetyltransf"/>
</dbReference>
<dbReference type="InterPro" id="IPR000182">
    <property type="entry name" value="GNAT_dom"/>
</dbReference>
<dbReference type="InterPro" id="IPR017813">
    <property type="entry name" value="Mycothiol_AcTrfase"/>
</dbReference>
<dbReference type="NCBIfam" id="TIGR03448">
    <property type="entry name" value="mycothiol_MshD"/>
    <property type="match status" value="1"/>
</dbReference>
<dbReference type="PANTHER" id="PTHR43877">
    <property type="entry name" value="AMINOALKYLPHOSPHONATE N-ACETYLTRANSFERASE-RELATED-RELATED"/>
    <property type="match status" value="1"/>
</dbReference>
<dbReference type="Pfam" id="PF00583">
    <property type="entry name" value="Acetyltransf_1"/>
    <property type="match status" value="1"/>
</dbReference>
<dbReference type="Pfam" id="PF13508">
    <property type="entry name" value="Acetyltransf_7"/>
    <property type="match status" value="1"/>
</dbReference>
<dbReference type="PIRSF" id="PIRSF021524">
    <property type="entry name" value="MSH_acetyltransferase"/>
    <property type="match status" value="1"/>
</dbReference>
<dbReference type="SUPFAM" id="SSF55729">
    <property type="entry name" value="Acyl-CoA N-acyltransferases (Nat)"/>
    <property type="match status" value="1"/>
</dbReference>
<dbReference type="PROSITE" id="PS51186">
    <property type="entry name" value="GNAT"/>
    <property type="match status" value="2"/>
</dbReference>
<sequence length="344" mass="36664">MTSLSWQQTLSAMDVDDIVSLLAAAERADGTGPVSEDVRLALRPGLRIGAGRHLLAVSAAADTSGPNVPDTPGDQNAADTSTMPGRVPAGRIIGYAHLGGVDQARQAEVVVHPDHRGRGVGTALVGGLTEALAAPSSRLDIWAHGDLPAAAALATRLTFTRTRVLLQLRRPLAAGTPLPDPRLPAGVTVRTFVPDQDDRAWLAVNAAAFADHPEQGRWTLDDLARRRAEPWFDPRGFFLAEHDGALVGFHWTKVHETDQTPPRNAQPGPIGEVYVVGVLPGAGGAGLGRALTLIGLRHLQAEGLDSVLLYVDEDNVRAVRMYTGLGFITYVRDVSYHWERPSTG</sequence>
<proteinExistence type="inferred from homology"/>
<keyword id="KW-0012">Acyltransferase</keyword>
<keyword id="KW-1185">Reference proteome</keyword>
<keyword id="KW-0677">Repeat</keyword>
<keyword id="KW-0808">Transferase</keyword>
<name>MSHD_FRACC</name>
<feature type="chain" id="PRO_0000400256" description="Mycothiol acetyltransferase">
    <location>
        <begin position="1"/>
        <end position="344"/>
    </location>
</feature>
<feature type="domain" description="N-acetyltransferase 1" evidence="1">
    <location>
        <begin position="40"/>
        <end position="179"/>
    </location>
</feature>
<feature type="domain" description="N-acetyltransferase 2" evidence="1">
    <location>
        <begin position="187"/>
        <end position="344"/>
    </location>
</feature>
<feature type="region of interest" description="Disordered" evidence="2">
    <location>
        <begin position="61"/>
        <end position="83"/>
    </location>
</feature>
<feature type="compositionally biased region" description="Polar residues" evidence="2">
    <location>
        <begin position="73"/>
        <end position="83"/>
    </location>
</feature>
<feature type="binding site" evidence="1">
    <location>
        <position position="36"/>
    </location>
    <ligand>
        <name>1D-myo-inositol 2-(L-cysteinylamino)-2-deoxy-alpha-D-glucopyranoside</name>
        <dbReference type="ChEBI" id="CHEBI:58887"/>
    </ligand>
</feature>
<feature type="binding site" evidence="1">
    <location>
        <begin position="109"/>
        <end position="111"/>
    </location>
    <ligand>
        <name>acetyl-CoA</name>
        <dbReference type="ChEBI" id="CHEBI:57288"/>
        <label>1</label>
    </ligand>
</feature>
<feature type="binding site" evidence="1">
    <location>
        <position position="214"/>
    </location>
    <ligand>
        <name>1D-myo-inositol 2-(L-cysteinylamino)-2-deoxy-alpha-D-glucopyranoside</name>
        <dbReference type="ChEBI" id="CHEBI:58887"/>
    </ligand>
</feature>
<feature type="binding site" evidence="1">
    <location>
        <position position="253"/>
    </location>
    <ligand>
        <name>1D-myo-inositol 2-(L-cysteinylamino)-2-deoxy-alpha-D-glucopyranoside</name>
        <dbReference type="ChEBI" id="CHEBI:58887"/>
    </ligand>
</feature>
<feature type="binding site" evidence="1">
    <location>
        <position position="272"/>
    </location>
    <ligand>
        <name>1D-myo-inositol 2-(L-cysteinylamino)-2-deoxy-alpha-D-glucopyranoside</name>
        <dbReference type="ChEBI" id="CHEBI:58887"/>
    </ligand>
</feature>
<feature type="binding site" evidence="1">
    <location>
        <begin position="276"/>
        <end position="278"/>
    </location>
    <ligand>
        <name>acetyl-CoA</name>
        <dbReference type="ChEBI" id="CHEBI:57288"/>
        <label>2</label>
    </ligand>
</feature>
<feature type="binding site" evidence="1">
    <location>
        <begin position="283"/>
        <end position="289"/>
    </location>
    <ligand>
        <name>acetyl-CoA</name>
        <dbReference type="ChEBI" id="CHEBI:57288"/>
        <label>2</label>
    </ligand>
</feature>
<feature type="binding site" evidence="1">
    <location>
        <position position="310"/>
    </location>
    <ligand>
        <name>1D-myo-inositol 2-(L-cysteinylamino)-2-deoxy-alpha-D-glucopyranoside</name>
        <dbReference type="ChEBI" id="CHEBI:58887"/>
    </ligand>
</feature>
<feature type="binding site" evidence="1">
    <location>
        <begin position="315"/>
        <end position="320"/>
    </location>
    <ligand>
        <name>acetyl-CoA</name>
        <dbReference type="ChEBI" id="CHEBI:57288"/>
        <label>2</label>
    </ligand>
</feature>
<reference key="1">
    <citation type="journal article" date="2007" name="Genome Res.">
        <title>Genome characteristics of facultatively symbiotic Frankia sp. strains reflect host range and host plant biogeography.</title>
        <authorList>
            <person name="Normand P."/>
            <person name="Lapierre P."/>
            <person name="Tisa L.S."/>
            <person name="Gogarten J.P."/>
            <person name="Alloisio N."/>
            <person name="Bagnarol E."/>
            <person name="Bassi C.A."/>
            <person name="Berry A.M."/>
            <person name="Bickhart D.M."/>
            <person name="Choisne N."/>
            <person name="Couloux A."/>
            <person name="Cournoyer B."/>
            <person name="Cruveiller S."/>
            <person name="Daubin V."/>
            <person name="Demange N."/>
            <person name="Francino M.P."/>
            <person name="Goltsman E."/>
            <person name="Huang Y."/>
            <person name="Kopp O.R."/>
            <person name="Labarre L."/>
            <person name="Lapidus A."/>
            <person name="Lavire C."/>
            <person name="Marechal J."/>
            <person name="Martinez M."/>
            <person name="Mastronunzio J.E."/>
            <person name="Mullin B.C."/>
            <person name="Niemann J."/>
            <person name="Pujic P."/>
            <person name="Rawnsley T."/>
            <person name="Rouy Z."/>
            <person name="Schenowitz C."/>
            <person name="Sellstedt A."/>
            <person name="Tavares F."/>
            <person name="Tomkins J.P."/>
            <person name="Vallenet D."/>
            <person name="Valverde C."/>
            <person name="Wall L.G."/>
            <person name="Wang Y."/>
            <person name="Medigue C."/>
            <person name="Benson D.R."/>
        </authorList>
    </citation>
    <scope>NUCLEOTIDE SEQUENCE [LARGE SCALE GENOMIC DNA]</scope>
    <source>
        <strain>DSM 45818 / CECT 9043 / HFP020203 / CcI3</strain>
    </source>
</reference>
<evidence type="ECO:0000255" key="1">
    <source>
        <dbReference type="HAMAP-Rule" id="MF_01698"/>
    </source>
</evidence>
<evidence type="ECO:0000256" key="2">
    <source>
        <dbReference type="SAM" id="MobiDB-lite"/>
    </source>
</evidence>
<protein>
    <recommendedName>
        <fullName evidence="1">Mycothiol acetyltransferase</fullName>
        <shortName evidence="1">MSH acetyltransferase</shortName>
        <ecNumber evidence="1">2.3.1.189</ecNumber>
    </recommendedName>
    <alternativeName>
        <fullName evidence="1">Mycothiol synthase</fullName>
    </alternativeName>
</protein>
<gene>
    <name evidence="1" type="primary">mshD</name>
    <name type="ordered locus">Francci3_0442</name>
</gene>
<accession>Q2JFW4</accession>
<comment type="function">
    <text evidence="1">Catalyzes the transfer of acetyl from acetyl-CoA to desacetylmycothiol (Cys-GlcN-Ins) to form mycothiol.</text>
</comment>
<comment type="catalytic activity">
    <reaction evidence="1">
        <text>1D-myo-inositol 2-(L-cysteinylamino)-2-deoxy-alpha-D-glucopyranoside + acetyl-CoA = mycothiol + CoA + H(+)</text>
        <dbReference type="Rhea" id="RHEA:26172"/>
        <dbReference type="ChEBI" id="CHEBI:15378"/>
        <dbReference type="ChEBI" id="CHEBI:16768"/>
        <dbReference type="ChEBI" id="CHEBI:57287"/>
        <dbReference type="ChEBI" id="CHEBI:57288"/>
        <dbReference type="ChEBI" id="CHEBI:58887"/>
        <dbReference type="EC" id="2.3.1.189"/>
    </reaction>
</comment>
<comment type="subunit">
    <text evidence="1">Monomer.</text>
</comment>
<comment type="similarity">
    <text evidence="1">Belongs to the acetyltransferase family. MshD subfamily.</text>
</comment>
<organism>
    <name type="scientific">Frankia casuarinae (strain DSM 45818 / CECT 9043 / HFP020203 / CcI3)</name>
    <dbReference type="NCBI Taxonomy" id="106370"/>
    <lineage>
        <taxon>Bacteria</taxon>
        <taxon>Bacillati</taxon>
        <taxon>Actinomycetota</taxon>
        <taxon>Actinomycetes</taxon>
        <taxon>Frankiales</taxon>
        <taxon>Frankiaceae</taxon>
        <taxon>Frankia</taxon>
    </lineage>
</organism>